<evidence type="ECO:0000250" key="1"/>
<evidence type="ECO:0000305" key="2"/>
<reference key="1">
    <citation type="journal article" date="2002" name="Proc. Natl. Acad. Sci. U.S.A.">
        <title>Genome sequence and comparative microarray analysis of serotype M18 group A Streptococcus strains associated with acute rheumatic fever outbreaks.</title>
        <authorList>
            <person name="Smoot J.C."/>
            <person name="Barbian K.D."/>
            <person name="Van Gompel J.J."/>
            <person name="Smoot L.M."/>
            <person name="Chaussee M.S."/>
            <person name="Sylva G.L."/>
            <person name="Sturdevant D.E."/>
            <person name="Ricklefs S.M."/>
            <person name="Porcella S.F."/>
            <person name="Parkins L.D."/>
            <person name="Beres S.B."/>
            <person name="Campbell D.S."/>
            <person name="Smith T.M."/>
            <person name="Zhang Q."/>
            <person name="Kapur V."/>
            <person name="Daly J.A."/>
            <person name="Veasy L.G."/>
            <person name="Musser J.M."/>
        </authorList>
    </citation>
    <scope>NUCLEOTIDE SEQUENCE [LARGE SCALE GENOMIC DNA]</scope>
    <source>
        <strain>MGAS8232</strain>
    </source>
</reference>
<organism>
    <name type="scientific">Streptococcus pyogenes serotype M18 (strain MGAS8232)</name>
    <dbReference type="NCBI Taxonomy" id="186103"/>
    <lineage>
        <taxon>Bacteria</taxon>
        <taxon>Bacillati</taxon>
        <taxon>Bacillota</taxon>
        <taxon>Bacilli</taxon>
        <taxon>Lactobacillales</taxon>
        <taxon>Streptococcaceae</taxon>
        <taxon>Streptococcus</taxon>
    </lineage>
</organism>
<comment type="function">
    <text evidence="1">Catalyzes the conversion of dihydroorotate to orotate with fumarate as the electron acceptor.</text>
</comment>
<comment type="catalytic activity">
    <reaction>
        <text>(S)-dihydroorotate + fumarate = orotate + succinate</text>
        <dbReference type="Rhea" id="RHEA:30059"/>
        <dbReference type="ChEBI" id="CHEBI:29806"/>
        <dbReference type="ChEBI" id="CHEBI:30031"/>
        <dbReference type="ChEBI" id="CHEBI:30839"/>
        <dbReference type="ChEBI" id="CHEBI:30864"/>
        <dbReference type="EC" id="1.3.98.1"/>
    </reaction>
</comment>
<comment type="cofactor">
    <cofactor evidence="1">
        <name>FMN</name>
        <dbReference type="ChEBI" id="CHEBI:58210"/>
    </cofactor>
    <text evidence="1">Binds 1 FMN per subunit.</text>
</comment>
<comment type="pathway">
    <text>Pyrimidine metabolism; UMP biosynthesis via de novo pathway.</text>
</comment>
<comment type="subunit">
    <text evidence="1">Homodimer.</text>
</comment>
<comment type="subcellular location">
    <subcellularLocation>
        <location evidence="1">Cytoplasm</location>
    </subcellularLocation>
</comment>
<comment type="similarity">
    <text evidence="2">Belongs to the dihydroorotate dehydrogenase family. Type 1 subfamily.</text>
</comment>
<gene>
    <name type="primary">pyrD</name>
    <name type="ordered locus">spyM18_1441</name>
</gene>
<accession>Q8P0C0</accession>
<proteinExistence type="inferred from homology"/>
<dbReference type="EC" id="1.3.98.1"/>
<dbReference type="EMBL" id="AE009949">
    <property type="protein sequence ID" value="AAL98020.1"/>
    <property type="molecule type" value="Genomic_DNA"/>
</dbReference>
<dbReference type="RefSeq" id="WP_011017961.1">
    <property type="nucleotide sequence ID" value="NC_003485.1"/>
</dbReference>
<dbReference type="SMR" id="Q8P0C0"/>
<dbReference type="KEGG" id="spm:spyM18_1441"/>
<dbReference type="HOGENOM" id="CLU_042042_3_0_9"/>
<dbReference type="UniPathway" id="UPA00070"/>
<dbReference type="GO" id="GO:0005737">
    <property type="term" value="C:cytoplasm"/>
    <property type="evidence" value="ECO:0007669"/>
    <property type="project" value="UniProtKB-SubCell"/>
</dbReference>
<dbReference type="GO" id="GO:1990663">
    <property type="term" value="F:dihydroorotate dehydrogenase (fumarate) activity"/>
    <property type="evidence" value="ECO:0007669"/>
    <property type="project" value="UniProtKB-EC"/>
</dbReference>
<dbReference type="GO" id="GO:0006207">
    <property type="term" value="P:'de novo' pyrimidine nucleobase biosynthetic process"/>
    <property type="evidence" value="ECO:0007669"/>
    <property type="project" value="InterPro"/>
</dbReference>
<dbReference type="GO" id="GO:0044205">
    <property type="term" value="P:'de novo' UMP biosynthetic process"/>
    <property type="evidence" value="ECO:0007669"/>
    <property type="project" value="UniProtKB-UniRule"/>
</dbReference>
<dbReference type="CDD" id="cd04741">
    <property type="entry name" value="DHOD_1A_like"/>
    <property type="match status" value="1"/>
</dbReference>
<dbReference type="FunFam" id="3.20.20.70:FF:000027">
    <property type="entry name" value="Dihydropyrimidine dehydrogenase [NADP(+)]"/>
    <property type="match status" value="1"/>
</dbReference>
<dbReference type="Gene3D" id="3.20.20.70">
    <property type="entry name" value="Aldolase class I"/>
    <property type="match status" value="1"/>
</dbReference>
<dbReference type="InterPro" id="IPR013785">
    <property type="entry name" value="Aldolase_TIM"/>
</dbReference>
<dbReference type="InterPro" id="IPR050074">
    <property type="entry name" value="DHO_dehydrogenase"/>
</dbReference>
<dbReference type="InterPro" id="IPR033886">
    <property type="entry name" value="DHOD_1A"/>
</dbReference>
<dbReference type="InterPro" id="IPR024920">
    <property type="entry name" value="Dihydroorotate_DH_1"/>
</dbReference>
<dbReference type="InterPro" id="IPR012135">
    <property type="entry name" value="Dihydroorotate_DH_1_2"/>
</dbReference>
<dbReference type="InterPro" id="IPR005720">
    <property type="entry name" value="Dihydroorotate_DH_cat"/>
</dbReference>
<dbReference type="InterPro" id="IPR001295">
    <property type="entry name" value="Dihydroorotate_DH_CS"/>
</dbReference>
<dbReference type="NCBIfam" id="NF002702">
    <property type="entry name" value="PRK02506.1"/>
    <property type="match status" value="1"/>
</dbReference>
<dbReference type="PANTHER" id="PTHR48109:SF1">
    <property type="entry name" value="DIHYDROOROTATE DEHYDROGENASE (FUMARATE)"/>
    <property type="match status" value="1"/>
</dbReference>
<dbReference type="PANTHER" id="PTHR48109">
    <property type="entry name" value="DIHYDROOROTATE DEHYDROGENASE (QUINONE), MITOCHONDRIAL-RELATED"/>
    <property type="match status" value="1"/>
</dbReference>
<dbReference type="Pfam" id="PF01180">
    <property type="entry name" value="DHO_dh"/>
    <property type="match status" value="1"/>
</dbReference>
<dbReference type="PIRSF" id="PIRSF000164">
    <property type="entry name" value="DHO_oxidase"/>
    <property type="match status" value="1"/>
</dbReference>
<dbReference type="SUPFAM" id="SSF51395">
    <property type="entry name" value="FMN-linked oxidoreductases"/>
    <property type="match status" value="1"/>
</dbReference>
<dbReference type="PROSITE" id="PS00912">
    <property type="entry name" value="DHODEHASE_2"/>
    <property type="match status" value="1"/>
</dbReference>
<keyword id="KW-0963">Cytoplasm</keyword>
<keyword id="KW-0285">Flavoprotein</keyword>
<keyword id="KW-0288">FMN</keyword>
<keyword id="KW-0560">Oxidoreductase</keyword>
<keyword id="KW-0665">Pyrimidine biosynthesis</keyword>
<sequence>MVSTATQIGHFSFDNCLMNAAGVYCMTKEELMEVEKSQAASFVTKTGTLEVRPGNPEPRYADTRLGSINSMGLPNNGFRYYLDFVSDLAKTGQHKPHFLSVVGLSPTETETILKAIMASDYEGLVELNLSCPNVPGKPQIAYDFETTDQLLENIFTYYTKPLGIKLPPYFDIVHFDQAAAIFNKYPLSFVNCVNSIGNGLVIEDEQVLIKPKNGFGGIGGDYIKPTALANVHAFYKRLKPSIHIIGTGGVKTGRDAFEHILCGASMVQIGTVLHQEGPAIFERVTKELKTIMVEKGYQRLADFRGNLRYKD</sequence>
<name>PYRDA_STRP8</name>
<protein>
    <recommendedName>
        <fullName>Putative dihydroorotate dehydrogenase A (fumarate)</fullName>
        <shortName>DHOD A</shortName>
        <shortName>DHODase A</shortName>
        <shortName>DHOdehase A</shortName>
        <ecNumber>1.3.98.1</ecNumber>
    </recommendedName>
</protein>
<feature type="chain" id="PRO_1000100232" description="Putative dihydroorotate dehydrogenase A (fumarate)">
    <location>
        <begin position="1"/>
        <end position="311"/>
    </location>
</feature>
<feature type="active site" description="Nucleophile">
    <location>
        <position position="131"/>
    </location>
</feature>
<feature type="binding site" evidence="1">
    <location>
        <begin position="45"/>
        <end position="46"/>
    </location>
    <ligand>
        <name>FMN</name>
        <dbReference type="ChEBI" id="CHEBI:58210"/>
    </ligand>
</feature>
<feature type="binding site" evidence="1">
    <location>
        <position position="45"/>
    </location>
    <ligand>
        <name>substrate</name>
    </ligand>
</feature>
<feature type="binding site" evidence="1">
    <location>
        <begin position="69"/>
        <end position="73"/>
    </location>
    <ligand>
        <name>substrate</name>
    </ligand>
</feature>
<feature type="binding site" evidence="1">
    <location>
        <position position="128"/>
    </location>
    <ligand>
        <name>FMN</name>
        <dbReference type="ChEBI" id="CHEBI:58210"/>
    </ligand>
</feature>
<feature type="binding site" evidence="1">
    <location>
        <position position="128"/>
    </location>
    <ligand>
        <name>substrate</name>
    </ligand>
</feature>
<feature type="binding site" evidence="1">
    <location>
        <position position="165"/>
    </location>
    <ligand>
        <name>FMN</name>
        <dbReference type="ChEBI" id="CHEBI:58210"/>
    </ligand>
</feature>
<feature type="binding site" evidence="1">
    <location>
        <position position="193"/>
    </location>
    <ligand>
        <name>FMN</name>
        <dbReference type="ChEBI" id="CHEBI:58210"/>
    </ligand>
</feature>
<feature type="binding site" evidence="1">
    <location>
        <begin position="194"/>
        <end position="195"/>
    </location>
    <ligand>
        <name>substrate</name>
    </ligand>
</feature>
<feature type="binding site" evidence="1">
    <location>
        <position position="220"/>
    </location>
    <ligand>
        <name>FMN</name>
        <dbReference type="ChEBI" id="CHEBI:58210"/>
    </ligand>
</feature>
<feature type="binding site" evidence="1">
    <location>
        <begin position="248"/>
        <end position="249"/>
    </location>
    <ligand>
        <name>FMN</name>
        <dbReference type="ChEBI" id="CHEBI:58210"/>
    </ligand>
</feature>
<feature type="binding site" evidence="1">
    <location>
        <begin position="270"/>
        <end position="271"/>
    </location>
    <ligand>
        <name>FMN</name>
        <dbReference type="ChEBI" id="CHEBI:58210"/>
    </ligand>
</feature>